<comment type="function">
    <text evidence="5 8">Casein kinases are operationally defined by their preferential utilization of acidic proteins such as caseins as substrates. Can phosphorylate casein in vitro. Required for normal root development through modulation of cell elongation. Plants silencing CKI1 show abnormal root development, with reduced number of lateral and adventitious roots, and shortened primary roots as a result of reduced cell elongation. May be involved in abscisic acid (ABA) and brassinosteroid (BR) signaling pathways (PubMed:14535884). Plays an important role in the adaptive growth and fitness under low temperature (LT) conditions. May confer tolerance to LT through an auxin-dependent process (PubMed:24635058).</text>
</comment>
<comment type="catalytic activity">
    <reaction evidence="5">
        <text>L-seryl-[protein] + ATP = O-phospho-L-seryl-[protein] + ADP + H(+)</text>
        <dbReference type="Rhea" id="RHEA:17989"/>
        <dbReference type="Rhea" id="RHEA-COMP:9863"/>
        <dbReference type="Rhea" id="RHEA-COMP:11604"/>
        <dbReference type="ChEBI" id="CHEBI:15378"/>
        <dbReference type="ChEBI" id="CHEBI:29999"/>
        <dbReference type="ChEBI" id="CHEBI:30616"/>
        <dbReference type="ChEBI" id="CHEBI:83421"/>
        <dbReference type="ChEBI" id="CHEBI:456216"/>
        <dbReference type="EC" id="2.7.11.1"/>
    </reaction>
</comment>
<comment type="catalytic activity">
    <reaction evidence="5">
        <text>L-threonyl-[protein] + ATP = O-phospho-L-threonyl-[protein] + ADP + H(+)</text>
        <dbReference type="Rhea" id="RHEA:46608"/>
        <dbReference type="Rhea" id="RHEA-COMP:11060"/>
        <dbReference type="Rhea" id="RHEA-COMP:11605"/>
        <dbReference type="ChEBI" id="CHEBI:15378"/>
        <dbReference type="ChEBI" id="CHEBI:30013"/>
        <dbReference type="ChEBI" id="CHEBI:30616"/>
        <dbReference type="ChEBI" id="CHEBI:61977"/>
        <dbReference type="ChEBI" id="CHEBI:456216"/>
        <dbReference type="EC" id="2.7.11.1"/>
    </reaction>
</comment>
<comment type="activity regulation">
    <text evidence="5">Inhibited by N-(2-aminoethyl)-5-chloroisoquinoline-8-sulfonamide (CKI-7).</text>
</comment>
<comment type="subunit">
    <text evidence="1">Monomer.</text>
</comment>
<comment type="subcellular location">
    <subcellularLocation>
        <location evidence="2">Cytoplasm</location>
    </subcellularLocation>
    <subcellularLocation>
        <location evidence="5">Nucleus</location>
    </subcellularLocation>
</comment>
<comment type="tissue specificity">
    <text evidence="5 6">Expressed in leaves, stems, panicles and seeds (PubMed:14535884). Expressed in root tissues and lamina joints (PubMed:16827922).</text>
</comment>
<comment type="induction">
    <text evidence="5">Induced by 24-epi-brassinolide (24-eBL) and down-regulated by abscisic acid (ABA).</text>
</comment>
<comment type="PTM">
    <text evidence="1">Autophosphorylated.</text>
</comment>
<comment type="similarity">
    <text evidence="12">Belongs to the protein kinase superfamily. CK1 Ser/Thr protein kinase family. Casein kinase I subfamily.</text>
</comment>
<feature type="chain" id="PRO_0000437421" description="Casein kinase 1">
    <location>
        <begin position="1"/>
        <end position="463"/>
    </location>
</feature>
<feature type="domain" description="Protein kinase" evidence="3">
    <location>
        <begin position="9"/>
        <end position="278"/>
    </location>
</feature>
<feature type="region of interest" description="Disordered" evidence="4">
    <location>
        <begin position="296"/>
        <end position="448"/>
    </location>
</feature>
<feature type="compositionally biased region" description="Polar residues" evidence="4">
    <location>
        <begin position="296"/>
        <end position="306"/>
    </location>
</feature>
<feature type="compositionally biased region" description="Basic and acidic residues" evidence="4">
    <location>
        <begin position="315"/>
        <end position="328"/>
    </location>
</feature>
<feature type="compositionally biased region" description="Polar residues" evidence="4">
    <location>
        <begin position="376"/>
        <end position="396"/>
    </location>
</feature>
<feature type="compositionally biased region" description="Polar residues" evidence="4">
    <location>
        <begin position="404"/>
        <end position="440"/>
    </location>
</feature>
<feature type="active site" description="Proton acceptor" evidence="3">
    <location>
        <position position="128"/>
    </location>
</feature>
<feature type="binding site" evidence="3">
    <location>
        <begin position="15"/>
        <end position="23"/>
    </location>
    <ligand>
        <name>ATP</name>
        <dbReference type="ChEBI" id="CHEBI:30616"/>
    </ligand>
</feature>
<feature type="binding site" evidence="3">
    <location>
        <position position="38"/>
    </location>
    <ligand>
        <name>ATP</name>
        <dbReference type="ChEBI" id="CHEBI:30616"/>
    </ligand>
</feature>
<feature type="mutagenesis site" description="Poor growth, leading to a reduction in the number of panicles and culm length. Reduced growth rate, heading date and yield performance under low temperature." evidence="7 8">
    <original>I</original>
    <variation>K</variation>
    <location>
        <position position="357"/>
    </location>
</feature>
<feature type="sequence conflict" description="In Ref. 1; CAD32377." evidence="12" ref="1">
    <original>G</original>
    <variation>V</variation>
    <location>
        <position position="151"/>
    </location>
</feature>
<proteinExistence type="evidence at protein level"/>
<reference key="1">
    <citation type="journal article" date="2003" name="Plant J.">
        <title>Roles of OsCKI1, a rice casein kinase I, in root development and plant hormone sensitivity.</title>
        <authorList>
            <person name="Liu W."/>
            <person name="Xu Z.H."/>
            <person name="Luo D."/>
            <person name="Xue H.W."/>
        </authorList>
    </citation>
    <scope>NUCLEOTIDE SEQUENCE [MRNA]</scope>
    <scope>FUNCTION</scope>
    <scope>CATALYTIC ACTIVITY</scope>
    <scope>SUBCELLULAR LOCATION</scope>
    <scope>TISSUE SPECIFICITY</scope>
    <scope>INDUCTION</scope>
    <source>
        <strain>cv. Zhonghua 11</strain>
    </source>
</reference>
<reference key="2">
    <citation type="journal article" date="2005" name="Nature">
        <title>The map-based sequence of the rice genome.</title>
        <authorList>
            <consortium name="International rice genome sequencing project (IRGSP)"/>
        </authorList>
    </citation>
    <scope>NUCLEOTIDE SEQUENCE [LARGE SCALE GENOMIC DNA]</scope>
    <source>
        <strain>cv. Nipponbare</strain>
    </source>
</reference>
<reference key="3">
    <citation type="journal article" date="2008" name="Nucleic Acids Res.">
        <title>The rice annotation project database (RAP-DB): 2008 update.</title>
        <authorList>
            <consortium name="The rice annotation project (RAP)"/>
        </authorList>
    </citation>
    <scope>GENOME REANNOTATION</scope>
    <source>
        <strain>cv. Nipponbare</strain>
    </source>
</reference>
<reference key="4">
    <citation type="journal article" date="2013" name="Rice">
        <title>Improvement of the Oryza sativa Nipponbare reference genome using next generation sequence and optical map data.</title>
        <authorList>
            <person name="Kawahara Y."/>
            <person name="de la Bastide M."/>
            <person name="Hamilton J.P."/>
            <person name="Kanamori H."/>
            <person name="McCombie W.R."/>
            <person name="Ouyang S."/>
            <person name="Schwartz D.C."/>
            <person name="Tanaka T."/>
            <person name="Wu J."/>
            <person name="Zhou S."/>
            <person name="Childs K.L."/>
            <person name="Davidson R.M."/>
            <person name="Lin H."/>
            <person name="Quesada-Ocampo L."/>
            <person name="Vaillancourt B."/>
            <person name="Sakai H."/>
            <person name="Lee S.S."/>
            <person name="Kim J."/>
            <person name="Numa H."/>
            <person name="Itoh T."/>
            <person name="Buell C.R."/>
            <person name="Matsumoto T."/>
        </authorList>
    </citation>
    <scope>GENOME REANNOTATION</scope>
    <source>
        <strain>cv. Nipponbare</strain>
    </source>
</reference>
<reference key="5">
    <citation type="journal article" date="2005" name="PLoS Biol.">
        <title>The genomes of Oryza sativa: a history of duplications.</title>
        <authorList>
            <person name="Yu J."/>
            <person name="Wang J."/>
            <person name="Lin W."/>
            <person name="Li S."/>
            <person name="Li H."/>
            <person name="Zhou J."/>
            <person name="Ni P."/>
            <person name="Dong W."/>
            <person name="Hu S."/>
            <person name="Zeng C."/>
            <person name="Zhang J."/>
            <person name="Zhang Y."/>
            <person name="Li R."/>
            <person name="Xu Z."/>
            <person name="Li S."/>
            <person name="Li X."/>
            <person name="Zheng H."/>
            <person name="Cong L."/>
            <person name="Lin L."/>
            <person name="Yin J."/>
            <person name="Geng J."/>
            <person name="Li G."/>
            <person name="Shi J."/>
            <person name="Liu J."/>
            <person name="Lv H."/>
            <person name="Li J."/>
            <person name="Wang J."/>
            <person name="Deng Y."/>
            <person name="Ran L."/>
            <person name="Shi X."/>
            <person name="Wang X."/>
            <person name="Wu Q."/>
            <person name="Li C."/>
            <person name="Ren X."/>
            <person name="Wang J."/>
            <person name="Wang X."/>
            <person name="Li D."/>
            <person name="Liu D."/>
            <person name="Zhang X."/>
            <person name="Ji Z."/>
            <person name="Zhao W."/>
            <person name="Sun Y."/>
            <person name="Zhang Z."/>
            <person name="Bao J."/>
            <person name="Han Y."/>
            <person name="Dong L."/>
            <person name="Ji J."/>
            <person name="Chen P."/>
            <person name="Wu S."/>
            <person name="Liu J."/>
            <person name="Xiao Y."/>
            <person name="Bu D."/>
            <person name="Tan J."/>
            <person name="Yang L."/>
            <person name="Ye C."/>
            <person name="Zhang J."/>
            <person name="Xu J."/>
            <person name="Zhou Y."/>
            <person name="Yu Y."/>
            <person name="Zhang B."/>
            <person name="Zhuang S."/>
            <person name="Wei H."/>
            <person name="Liu B."/>
            <person name="Lei M."/>
            <person name="Yu H."/>
            <person name="Li Y."/>
            <person name="Xu H."/>
            <person name="Wei S."/>
            <person name="He X."/>
            <person name="Fang L."/>
            <person name="Zhang Z."/>
            <person name="Zhang Y."/>
            <person name="Huang X."/>
            <person name="Su Z."/>
            <person name="Tong W."/>
            <person name="Li J."/>
            <person name="Tong Z."/>
            <person name="Li S."/>
            <person name="Ye J."/>
            <person name="Wang L."/>
            <person name="Fang L."/>
            <person name="Lei T."/>
            <person name="Chen C.-S."/>
            <person name="Chen H.-C."/>
            <person name="Xu Z."/>
            <person name="Li H."/>
            <person name="Huang H."/>
            <person name="Zhang F."/>
            <person name="Xu H."/>
            <person name="Li N."/>
            <person name="Zhao C."/>
            <person name="Li S."/>
            <person name="Dong L."/>
            <person name="Huang Y."/>
            <person name="Li L."/>
            <person name="Xi Y."/>
            <person name="Qi Q."/>
            <person name="Li W."/>
            <person name="Zhang B."/>
            <person name="Hu W."/>
            <person name="Zhang Y."/>
            <person name="Tian X."/>
            <person name="Jiao Y."/>
            <person name="Liang X."/>
            <person name="Jin J."/>
            <person name="Gao L."/>
            <person name="Zheng W."/>
            <person name="Hao B."/>
            <person name="Liu S.-M."/>
            <person name="Wang W."/>
            <person name="Yuan L."/>
            <person name="Cao M."/>
            <person name="McDermott J."/>
            <person name="Samudrala R."/>
            <person name="Wang J."/>
            <person name="Wong G.K.-S."/>
            <person name="Yang H."/>
        </authorList>
    </citation>
    <scope>NUCLEOTIDE SEQUENCE [LARGE SCALE GENOMIC DNA]</scope>
    <source>
        <strain>cv. Nipponbare</strain>
    </source>
</reference>
<reference key="6">
    <citation type="journal article" date="2003" name="Science">
        <title>Collection, mapping, and annotation of over 28,000 cDNA clones from japonica rice.</title>
        <authorList>
            <consortium name="The rice full-length cDNA consortium"/>
        </authorList>
    </citation>
    <scope>NUCLEOTIDE SEQUENCE [LARGE SCALE MRNA]</scope>
    <source>
        <strain>cv. Nipponbare</strain>
    </source>
</reference>
<reference key="7">
    <citation type="journal article" date="2006" name="Plant J.">
        <title>A brassinolide-suppressed rice MADS-box transcription factor, OsMDP1, has a negative regulatory role in BR signaling.</title>
        <authorList>
            <person name="Duan K."/>
            <person name="Li L."/>
            <person name="Hu P."/>
            <person name="Xu S.P."/>
            <person name="Xu Z.H."/>
            <person name="Xue H.W."/>
        </authorList>
    </citation>
    <scope>TISSUE SPECIFICITY</scope>
</reference>
<reference key="8">
    <citation type="journal article" date="2010" name="Mol. Genet. Genomics">
        <title>Gain of deleterious function causes an autoimmune response and Bateson-Dobzhansky-Muller incompatibility in rice.</title>
        <authorList>
            <person name="Yamamoto E."/>
            <person name="Takashi T."/>
            <person name="Morinaka Y."/>
            <person name="Lin S."/>
            <person name="Wu J."/>
            <person name="Matsumoto T."/>
            <person name="Kitano H."/>
            <person name="Matsuoka M."/>
            <person name="Ashikari M."/>
        </authorList>
    </citation>
    <scope>MUTAGENESIS OF ILE-357</scope>
</reference>
<reference key="9">
    <citation type="journal article" date="2014" name="Plant J.">
        <title>Rice LTG1 is involved in adaptive growth and fitness under low ambient temperature.</title>
        <authorList>
            <person name="Lu G."/>
            <person name="Wu F.Q."/>
            <person name="Wu W."/>
            <person name="Wang H.J."/>
            <person name="Zheng X.M."/>
            <person name="Zhang Y."/>
            <person name="Chen X."/>
            <person name="Zhou K."/>
            <person name="Jin M."/>
            <person name="Cheng Z."/>
            <person name="Li X."/>
            <person name="Jiang L."/>
            <person name="Wang H."/>
            <person name="Wan J."/>
        </authorList>
    </citation>
    <scope>FUNCTION</scope>
    <scope>MUTAGENESIS OF ILE-357</scope>
</reference>
<dbReference type="EC" id="2.7.11.1" evidence="5"/>
<dbReference type="EMBL" id="AJ487966">
    <property type="protein sequence ID" value="CAD32377.1"/>
    <property type="molecule type" value="mRNA"/>
</dbReference>
<dbReference type="EMBL" id="AP004053">
    <property type="protein sequence ID" value="BAD21551.1"/>
    <property type="molecule type" value="Genomic_DNA"/>
</dbReference>
<dbReference type="EMBL" id="AP008208">
    <property type="protein sequence ID" value="BAF09379.1"/>
    <property type="molecule type" value="Genomic_DNA"/>
</dbReference>
<dbReference type="EMBL" id="AP014958">
    <property type="protein sequence ID" value="BAS79831.1"/>
    <property type="molecule type" value="Genomic_DNA"/>
</dbReference>
<dbReference type="EMBL" id="CM000139">
    <property type="protein sequence ID" value="EEE57397.1"/>
    <property type="molecule type" value="Genomic_DNA"/>
</dbReference>
<dbReference type="EMBL" id="AK101388">
    <property type="protein sequence ID" value="BAG95038.1"/>
    <property type="molecule type" value="mRNA"/>
</dbReference>
<dbReference type="RefSeq" id="XP_015626436.1">
    <property type="nucleotide sequence ID" value="XM_015770950.1"/>
</dbReference>
<dbReference type="SMR" id="Q6K9N1"/>
<dbReference type="FunCoup" id="Q6K9N1">
    <property type="interactions" value="2635"/>
</dbReference>
<dbReference type="STRING" id="39947.Q6K9N1"/>
<dbReference type="PaxDb" id="39947-Q6K9N1"/>
<dbReference type="EnsemblPlants" id="Os02t0622100-01">
    <property type="protein sequence ID" value="Os02t0622100-01"/>
    <property type="gene ID" value="Os02g0622100"/>
</dbReference>
<dbReference type="Gramene" id="Os02t0622100-01">
    <property type="protein sequence ID" value="Os02t0622100-01"/>
    <property type="gene ID" value="Os02g0622100"/>
</dbReference>
<dbReference type="KEGG" id="dosa:Os02g0622100"/>
<dbReference type="eggNOG" id="KOG1164">
    <property type="taxonomic scope" value="Eukaryota"/>
</dbReference>
<dbReference type="HOGENOM" id="CLU_019279_0_2_1"/>
<dbReference type="InParanoid" id="Q6K9N1"/>
<dbReference type="OMA" id="NKCFIHR"/>
<dbReference type="OrthoDB" id="5800476at2759"/>
<dbReference type="Proteomes" id="UP000000763">
    <property type="component" value="Chromosome 2"/>
</dbReference>
<dbReference type="Proteomes" id="UP000007752">
    <property type="component" value="Chromosome 2"/>
</dbReference>
<dbReference type="Proteomes" id="UP000059680">
    <property type="component" value="Chromosome 2"/>
</dbReference>
<dbReference type="GO" id="GO:0005737">
    <property type="term" value="C:cytoplasm"/>
    <property type="evidence" value="ECO:0000318"/>
    <property type="project" value="GO_Central"/>
</dbReference>
<dbReference type="GO" id="GO:0005634">
    <property type="term" value="C:nucleus"/>
    <property type="evidence" value="ECO:0000314"/>
    <property type="project" value="Gramene"/>
</dbReference>
<dbReference type="GO" id="GO:0005524">
    <property type="term" value="F:ATP binding"/>
    <property type="evidence" value="ECO:0007669"/>
    <property type="project" value="UniProtKB-KW"/>
</dbReference>
<dbReference type="GO" id="GO:0106310">
    <property type="term" value="F:protein serine kinase activity"/>
    <property type="evidence" value="ECO:0007669"/>
    <property type="project" value="RHEA"/>
</dbReference>
<dbReference type="GO" id="GO:0004674">
    <property type="term" value="F:protein serine/threonine kinase activity"/>
    <property type="evidence" value="ECO:0000318"/>
    <property type="project" value="GO_Central"/>
</dbReference>
<dbReference type="GO" id="GO:0009850">
    <property type="term" value="P:auxin metabolic process"/>
    <property type="evidence" value="ECO:0000315"/>
    <property type="project" value="Gramene"/>
</dbReference>
<dbReference type="GO" id="GO:0006897">
    <property type="term" value="P:endocytosis"/>
    <property type="evidence" value="ECO:0000318"/>
    <property type="project" value="GO_Central"/>
</dbReference>
<dbReference type="GO" id="GO:0009741">
    <property type="term" value="P:response to brassinosteroid"/>
    <property type="evidence" value="ECO:0000315"/>
    <property type="project" value="Gramene"/>
</dbReference>
<dbReference type="GO" id="GO:0009409">
    <property type="term" value="P:response to cold"/>
    <property type="evidence" value="ECO:0000315"/>
    <property type="project" value="UniProtKB"/>
</dbReference>
<dbReference type="GO" id="GO:0048364">
    <property type="term" value="P:root development"/>
    <property type="evidence" value="ECO:0000315"/>
    <property type="project" value="Gramene"/>
</dbReference>
<dbReference type="GO" id="GO:0007165">
    <property type="term" value="P:signal transduction"/>
    <property type="evidence" value="ECO:0000318"/>
    <property type="project" value="GO_Central"/>
</dbReference>
<dbReference type="GO" id="GO:0009826">
    <property type="term" value="P:unidimensional cell growth"/>
    <property type="evidence" value="ECO:0000315"/>
    <property type="project" value="Gramene"/>
</dbReference>
<dbReference type="CDD" id="cd14125">
    <property type="entry name" value="STKc_CK1_delta_epsilon"/>
    <property type="match status" value="1"/>
</dbReference>
<dbReference type="FunFam" id="1.10.510.10:FF:000164">
    <property type="entry name" value="Casein kinase 1-like protein"/>
    <property type="match status" value="1"/>
</dbReference>
<dbReference type="FunFam" id="3.30.200.20:FF:000538">
    <property type="entry name" value="Putative Casein kinase I"/>
    <property type="match status" value="1"/>
</dbReference>
<dbReference type="Gene3D" id="1.10.510.10">
    <property type="entry name" value="Transferase(Phosphotransferase) domain 1"/>
    <property type="match status" value="1"/>
</dbReference>
<dbReference type="InterPro" id="IPR050235">
    <property type="entry name" value="CK1_Ser-Thr_kinase"/>
</dbReference>
<dbReference type="InterPro" id="IPR011009">
    <property type="entry name" value="Kinase-like_dom_sf"/>
</dbReference>
<dbReference type="InterPro" id="IPR000719">
    <property type="entry name" value="Prot_kinase_dom"/>
</dbReference>
<dbReference type="InterPro" id="IPR017441">
    <property type="entry name" value="Protein_kinase_ATP_BS"/>
</dbReference>
<dbReference type="InterPro" id="IPR008271">
    <property type="entry name" value="Ser/Thr_kinase_AS"/>
</dbReference>
<dbReference type="PANTHER" id="PTHR11909">
    <property type="entry name" value="CASEIN KINASE-RELATED"/>
    <property type="match status" value="1"/>
</dbReference>
<dbReference type="Pfam" id="PF00069">
    <property type="entry name" value="Pkinase"/>
    <property type="match status" value="1"/>
</dbReference>
<dbReference type="SMART" id="SM00220">
    <property type="entry name" value="S_TKc"/>
    <property type="match status" value="1"/>
</dbReference>
<dbReference type="SUPFAM" id="SSF56112">
    <property type="entry name" value="Protein kinase-like (PK-like)"/>
    <property type="match status" value="1"/>
</dbReference>
<dbReference type="PROSITE" id="PS00107">
    <property type="entry name" value="PROTEIN_KINASE_ATP"/>
    <property type="match status" value="1"/>
</dbReference>
<dbReference type="PROSITE" id="PS50011">
    <property type="entry name" value="PROTEIN_KINASE_DOM"/>
    <property type="match status" value="1"/>
</dbReference>
<dbReference type="PROSITE" id="PS00108">
    <property type="entry name" value="PROTEIN_KINASE_ST"/>
    <property type="match status" value="1"/>
</dbReference>
<name>CKI1_ORYSJ</name>
<keyword id="KW-0067">ATP-binding</keyword>
<keyword id="KW-0963">Cytoplasm</keyword>
<keyword id="KW-0341">Growth regulation</keyword>
<keyword id="KW-0418">Kinase</keyword>
<keyword id="KW-0547">Nucleotide-binding</keyword>
<keyword id="KW-0539">Nucleus</keyword>
<keyword id="KW-1185">Reference proteome</keyword>
<keyword id="KW-0723">Serine/threonine-protein kinase</keyword>
<keyword id="KW-0346">Stress response</keyword>
<keyword id="KW-0808">Transferase</keyword>
<protein>
    <recommendedName>
        <fullName evidence="9">Casein kinase 1</fullName>
        <shortName evidence="9">OsCKI1</shortName>
        <ecNumber evidence="5">2.7.11.1</ecNumber>
    </recommendedName>
    <alternativeName>
        <fullName evidence="10">Protein HYBRID BREAKDOWN 2</fullName>
    </alternativeName>
    <alternativeName>
        <fullName evidence="11">Protein LOW TEMPERATURE GROWTH 1</fullName>
    </alternativeName>
</protein>
<organism>
    <name type="scientific">Oryza sativa subsp. japonica</name>
    <name type="common">Rice</name>
    <dbReference type="NCBI Taxonomy" id="39947"/>
    <lineage>
        <taxon>Eukaryota</taxon>
        <taxon>Viridiplantae</taxon>
        <taxon>Streptophyta</taxon>
        <taxon>Embryophyta</taxon>
        <taxon>Tracheophyta</taxon>
        <taxon>Spermatophyta</taxon>
        <taxon>Magnoliopsida</taxon>
        <taxon>Liliopsida</taxon>
        <taxon>Poales</taxon>
        <taxon>Poaceae</taxon>
        <taxon>BOP clade</taxon>
        <taxon>Oryzoideae</taxon>
        <taxon>Oryzeae</taxon>
        <taxon>Oryzinae</taxon>
        <taxon>Oryza</taxon>
        <taxon>Oryza sativa</taxon>
    </lineage>
</organism>
<accession>Q6K9N1</accession>
<accession>Q70YQ4</accession>
<evidence type="ECO:0000250" key="1">
    <source>
        <dbReference type="UniProtKB" id="P48730"/>
    </source>
</evidence>
<evidence type="ECO:0000250" key="2">
    <source>
        <dbReference type="UniProtKB" id="Q9ZWB3"/>
    </source>
</evidence>
<evidence type="ECO:0000255" key="3">
    <source>
        <dbReference type="PROSITE-ProRule" id="PRU00159"/>
    </source>
</evidence>
<evidence type="ECO:0000256" key="4">
    <source>
        <dbReference type="SAM" id="MobiDB-lite"/>
    </source>
</evidence>
<evidence type="ECO:0000269" key="5">
    <source>
    </source>
</evidence>
<evidence type="ECO:0000269" key="6">
    <source>
    </source>
</evidence>
<evidence type="ECO:0000269" key="7">
    <source>
    </source>
</evidence>
<evidence type="ECO:0000269" key="8">
    <source>
    </source>
</evidence>
<evidence type="ECO:0000303" key="9">
    <source>
    </source>
</evidence>
<evidence type="ECO:0000303" key="10">
    <source>
    </source>
</evidence>
<evidence type="ECO:0000303" key="11">
    <source>
    </source>
</evidence>
<evidence type="ECO:0000305" key="12"/>
<evidence type="ECO:0000312" key="13">
    <source>
        <dbReference type="EMBL" id="BAD21551.1"/>
    </source>
</evidence>
<evidence type="ECO:0000312" key="14">
    <source>
        <dbReference type="EMBL" id="BAF09379.1"/>
    </source>
</evidence>
<evidence type="ECO:0000312" key="15">
    <source>
        <dbReference type="EMBL" id="EEE57397.1"/>
    </source>
</evidence>
<gene>
    <name type="primary">CKI1</name>
    <name evidence="10" type="synonym">HBD2</name>
    <name evidence="11" type="synonym">LTG1</name>
    <name evidence="14" type="ordered locus">Os02g0622100</name>
    <name evidence="12" type="ordered locus">LOC_Os02g40860</name>
    <name evidence="13" type="ORF">OJ1234_B11.27</name>
    <name evidence="15" type="ORF">OsJ_07571</name>
</gene>
<sequence length="463" mass="52727">MEHVIGGKFKLGRKIGSGSFGELYLGVNIQSSEEVAIKLESVKSRHPQLHYESKLYMLLQGGTGIPHLKWFGVEGEYNVMVIDLLGPSLEDLFNYCNRKFSLKTVLMLADQMINRVEYMHTRGFLHRDIKPDNFLMGLGRKASQVYVIDYGLAKKYRDLQTHKHIPYRENKNLTGTARYASVNTHLGVEQSRRDDLESLGYVLMYFLRGSLPWQGLKAGTKKQKYDKISEKKMLTPVEVLCKSYPTEFISYFHYCRSLRFEDKPDYSYLKRLFRDLFIREGYQLDYIFDWTKQGSESNRLRSSGRTSGLVGPSAERTERAAARQDVPDRFSGTVDPFARRTGSGSGHYGEHTKHRNILDSLLAPKTAVDLDKRRPTSSSRNGSTSRKALLSSSRPSSGDPIDPNRSNLIPTSSGSSRPSTMQRLHQSTGLETRSSLTKTARNVHDDPTLRTFERLSISADRRK</sequence>